<dbReference type="EMBL" id="AE017180">
    <property type="protein sequence ID" value="AAR36856.1"/>
    <property type="molecule type" value="Genomic_DNA"/>
</dbReference>
<dbReference type="RefSeq" id="NP_954506.1">
    <property type="nucleotide sequence ID" value="NC_002939.5"/>
</dbReference>
<dbReference type="RefSeq" id="WP_010944075.1">
    <property type="nucleotide sequence ID" value="NC_002939.5"/>
</dbReference>
<dbReference type="SMR" id="Q746Q2"/>
<dbReference type="FunCoup" id="Q746Q2">
    <property type="interactions" value="304"/>
</dbReference>
<dbReference type="STRING" id="243231.GSU3466"/>
<dbReference type="EnsemblBacteria" id="AAR36856">
    <property type="protein sequence ID" value="AAR36856"/>
    <property type="gene ID" value="GSU3466"/>
</dbReference>
<dbReference type="KEGG" id="gsu:GSU3466"/>
<dbReference type="PATRIC" id="fig|243231.5.peg.3488"/>
<dbReference type="eggNOG" id="COG0706">
    <property type="taxonomic scope" value="Bacteria"/>
</dbReference>
<dbReference type="HOGENOM" id="CLU_016535_3_0_7"/>
<dbReference type="InParanoid" id="Q746Q2"/>
<dbReference type="OrthoDB" id="9780552at2"/>
<dbReference type="Proteomes" id="UP000000577">
    <property type="component" value="Chromosome"/>
</dbReference>
<dbReference type="GO" id="GO:0005886">
    <property type="term" value="C:plasma membrane"/>
    <property type="evidence" value="ECO:0000318"/>
    <property type="project" value="GO_Central"/>
</dbReference>
<dbReference type="GO" id="GO:0032977">
    <property type="term" value="F:membrane insertase activity"/>
    <property type="evidence" value="ECO:0000318"/>
    <property type="project" value="GO_Central"/>
</dbReference>
<dbReference type="GO" id="GO:0051205">
    <property type="term" value="P:protein insertion into membrane"/>
    <property type="evidence" value="ECO:0000318"/>
    <property type="project" value="GO_Central"/>
</dbReference>
<dbReference type="GO" id="GO:0015031">
    <property type="term" value="P:protein transport"/>
    <property type="evidence" value="ECO:0007669"/>
    <property type="project" value="UniProtKB-KW"/>
</dbReference>
<dbReference type="CDD" id="cd20070">
    <property type="entry name" value="5TM_YidC_Alb3"/>
    <property type="match status" value="1"/>
</dbReference>
<dbReference type="CDD" id="cd19961">
    <property type="entry name" value="EcYidC-like_peri"/>
    <property type="match status" value="1"/>
</dbReference>
<dbReference type="Gene3D" id="2.70.98.90">
    <property type="match status" value="1"/>
</dbReference>
<dbReference type="HAMAP" id="MF_01810">
    <property type="entry name" value="YidC_type1"/>
    <property type="match status" value="1"/>
</dbReference>
<dbReference type="InterPro" id="IPR019998">
    <property type="entry name" value="Membr_insert_YidC"/>
</dbReference>
<dbReference type="InterPro" id="IPR028053">
    <property type="entry name" value="Membr_insert_YidC_N"/>
</dbReference>
<dbReference type="InterPro" id="IPR001708">
    <property type="entry name" value="YidC/ALB3/OXA1/COX18"/>
</dbReference>
<dbReference type="InterPro" id="IPR028055">
    <property type="entry name" value="YidC/Oxa/ALB_C"/>
</dbReference>
<dbReference type="InterPro" id="IPR047196">
    <property type="entry name" value="YidC_ALB_C"/>
</dbReference>
<dbReference type="InterPro" id="IPR038221">
    <property type="entry name" value="YidC_periplasmic_sf"/>
</dbReference>
<dbReference type="NCBIfam" id="NF002352">
    <property type="entry name" value="PRK01318.1-3"/>
    <property type="match status" value="1"/>
</dbReference>
<dbReference type="NCBIfam" id="NF002353">
    <property type="entry name" value="PRK01318.1-4"/>
    <property type="match status" value="1"/>
</dbReference>
<dbReference type="NCBIfam" id="TIGR03593">
    <property type="entry name" value="yidC_nterm"/>
    <property type="match status" value="1"/>
</dbReference>
<dbReference type="NCBIfam" id="TIGR03592">
    <property type="entry name" value="yidC_oxa1_cterm"/>
    <property type="match status" value="1"/>
</dbReference>
<dbReference type="PANTHER" id="PTHR12428:SF65">
    <property type="entry name" value="CYTOCHROME C OXIDASE ASSEMBLY PROTEIN COX18, MITOCHONDRIAL"/>
    <property type="match status" value="1"/>
</dbReference>
<dbReference type="PANTHER" id="PTHR12428">
    <property type="entry name" value="OXA1"/>
    <property type="match status" value="1"/>
</dbReference>
<dbReference type="Pfam" id="PF02096">
    <property type="entry name" value="60KD_IMP"/>
    <property type="match status" value="1"/>
</dbReference>
<dbReference type="Pfam" id="PF14849">
    <property type="entry name" value="YidC_periplas"/>
    <property type="match status" value="1"/>
</dbReference>
<dbReference type="PRINTS" id="PR00701">
    <property type="entry name" value="60KDINNERMP"/>
</dbReference>
<dbReference type="PRINTS" id="PR01900">
    <property type="entry name" value="YIDCPROTEIN"/>
</dbReference>
<feature type="chain" id="PRO_1000070101" description="Membrane protein insertase YidC">
    <location>
        <begin position="1"/>
        <end position="531"/>
    </location>
</feature>
<feature type="transmembrane region" description="Helical" evidence="1">
    <location>
        <begin position="5"/>
        <end position="25"/>
    </location>
</feature>
<feature type="transmembrane region" description="Helical" evidence="1">
    <location>
        <begin position="343"/>
        <end position="363"/>
    </location>
</feature>
<feature type="transmembrane region" description="Helical" evidence="1">
    <location>
        <begin position="415"/>
        <end position="435"/>
    </location>
</feature>
<feature type="transmembrane region" description="Helical" evidence="1">
    <location>
        <begin position="489"/>
        <end position="509"/>
    </location>
</feature>
<proteinExistence type="inferred from homology"/>
<protein>
    <recommendedName>
        <fullName evidence="1">Membrane protein insertase YidC</fullName>
    </recommendedName>
    <alternativeName>
        <fullName evidence="1">Foldase YidC</fullName>
    </alternativeName>
    <alternativeName>
        <fullName evidence="1">Membrane integrase YidC</fullName>
    </alternativeName>
    <alternativeName>
        <fullName evidence="1">Membrane protein YidC</fullName>
    </alternativeName>
</protein>
<sequence length="531" mass="58699">MEKRALIAVVLSILFFYGYTALFSPPPKETPKPVATATQSQPAQQVTAAPVPVAVPAQPQPAVAARDVSVDTPAYSVTFSTQGGSIKRLDLKRYHETAGPGGKNVTLVSEDNPSNYTIGLRAPGFGLDQNAVFVPSADALTVGPGEKKQLSFTWVSPAGVTVTKTYNFSGDGYGLEIQYQVTNSGSARVSSPVQTVQTYPLVPKVKESRFETFGPATFAQDKLFEDKVKDLESGAKTHAAPLWSGFADKYFLSAVLAHEGSMAAATIRKTASGYLENTISSPELSLNPGEGRALTYRLFFGPKDIDVLKAQGNSLERAINLGWFAMLAKPLLHSLKFFHNYTGNYGIAIIIITVIIKVIFYPLTHSSYKSMKEMQKLQPKMQQLREKYKNDREAMNRAMMELYQTHKVNPVGGCLPMLVQIPVFFALYKALMFSIELRHAPFMLWITDLAAKDPYYVTPIIMGVTMVIQQKMTPSQMDPVQQKMMMALPVVFTFMFLNFPSGLVLYWLVNNVLTIIQQYYINRSISTAEAK</sequence>
<accession>Q746Q2</accession>
<evidence type="ECO:0000255" key="1">
    <source>
        <dbReference type="HAMAP-Rule" id="MF_01810"/>
    </source>
</evidence>
<name>YIDC_GEOSL</name>
<organism>
    <name type="scientific">Geobacter sulfurreducens (strain ATCC 51573 / DSM 12127 / PCA)</name>
    <dbReference type="NCBI Taxonomy" id="243231"/>
    <lineage>
        <taxon>Bacteria</taxon>
        <taxon>Pseudomonadati</taxon>
        <taxon>Thermodesulfobacteriota</taxon>
        <taxon>Desulfuromonadia</taxon>
        <taxon>Geobacterales</taxon>
        <taxon>Geobacteraceae</taxon>
        <taxon>Geobacter</taxon>
    </lineage>
</organism>
<comment type="function">
    <text evidence="1">Required for the insertion and/or proper folding and/or complex formation of integral membrane proteins into the membrane. Involved in integration of membrane proteins that insert both dependently and independently of the Sec translocase complex, as well as at least some lipoproteins. Aids folding of multispanning membrane proteins.</text>
</comment>
<comment type="subunit">
    <text evidence="1">Interacts with the Sec translocase complex via SecD. Specifically interacts with transmembrane segments of nascent integral membrane proteins during membrane integration.</text>
</comment>
<comment type="subcellular location">
    <subcellularLocation>
        <location evidence="1">Cell inner membrane</location>
        <topology evidence="1">Multi-pass membrane protein</topology>
    </subcellularLocation>
</comment>
<comment type="similarity">
    <text evidence="1">Belongs to the OXA1/ALB3/YidC family. Type 1 subfamily.</text>
</comment>
<keyword id="KW-0997">Cell inner membrane</keyword>
<keyword id="KW-1003">Cell membrane</keyword>
<keyword id="KW-0143">Chaperone</keyword>
<keyword id="KW-0472">Membrane</keyword>
<keyword id="KW-0653">Protein transport</keyword>
<keyword id="KW-1185">Reference proteome</keyword>
<keyword id="KW-0812">Transmembrane</keyword>
<keyword id="KW-1133">Transmembrane helix</keyword>
<keyword id="KW-0813">Transport</keyword>
<reference key="1">
    <citation type="journal article" date="2003" name="Science">
        <title>Genome of Geobacter sulfurreducens: metal reduction in subsurface environments.</title>
        <authorList>
            <person name="Methe B.A."/>
            <person name="Nelson K.E."/>
            <person name="Eisen J.A."/>
            <person name="Paulsen I.T."/>
            <person name="Nelson W.C."/>
            <person name="Heidelberg J.F."/>
            <person name="Wu D."/>
            <person name="Wu M."/>
            <person name="Ward N.L."/>
            <person name="Beanan M.J."/>
            <person name="Dodson R.J."/>
            <person name="Madupu R."/>
            <person name="Brinkac L.M."/>
            <person name="Daugherty S.C."/>
            <person name="DeBoy R.T."/>
            <person name="Durkin A.S."/>
            <person name="Gwinn M.L."/>
            <person name="Kolonay J.F."/>
            <person name="Sullivan S.A."/>
            <person name="Haft D.H."/>
            <person name="Selengut J."/>
            <person name="Davidsen T.M."/>
            <person name="Zafar N."/>
            <person name="White O."/>
            <person name="Tran B."/>
            <person name="Romero C."/>
            <person name="Forberger H.A."/>
            <person name="Weidman J.F."/>
            <person name="Khouri H.M."/>
            <person name="Feldblyum T.V."/>
            <person name="Utterback T.R."/>
            <person name="Van Aken S.E."/>
            <person name="Lovley D.R."/>
            <person name="Fraser C.M."/>
        </authorList>
    </citation>
    <scope>NUCLEOTIDE SEQUENCE [LARGE SCALE GENOMIC DNA]</scope>
    <source>
        <strain>ATCC 51573 / DSM 12127 / PCA</strain>
    </source>
</reference>
<gene>
    <name evidence="1" type="primary">yidC</name>
    <name type="ordered locus">GSU3466</name>
</gene>